<keyword id="KW-0520">NAD</keyword>
<keyword id="KW-0560">Oxidoreductase</keyword>
<keyword id="KW-1185">Reference proteome</keyword>
<protein>
    <recommendedName>
        <fullName>Mannitol-1-phosphate 5-dehydrogenase</fullName>
        <ecNumber>1.1.1.17</ecNumber>
    </recommendedName>
</protein>
<sequence length="384" mass="43099">MNAVHFGAGNIGRGFIGEILAKNGFHITFVDVNETIIQALKERKSYTIELADASHQQINVENVTGLNNMTEPEKVVEAIAEADLVTTAIGPNILPRIAELIAQGIDARAEANCQKPLDIIACENMIGGSTFLAEEVAKYLKNPAYAEQWIGFPDAAVDRIVPLQKHEDPLFVQVEPFCEWVIDDTNRKAKEIQLEGVHYVADLEPYIERKLFSVNTGHATVAYTGALLGYQTIDEAMQDALVVAQLKSVLQETGKLLVAKWNFDEQEHAAYIEKIIQRFQNKYISDAITRVARTPIRKLGAQERFIRPIRELQERNLVSPHLLAMIGIVFNYHDPEDEQSRQLQEMLDQESVDTVIAEVTGIEDPETVKNIKQNVERYARPQVA</sequence>
<proteinExistence type="inferred from homology"/>
<feature type="chain" id="PRO_0000170706" description="Mannitol-1-phosphate 5-dehydrogenase">
    <location>
        <begin position="1"/>
        <end position="384"/>
    </location>
</feature>
<feature type="binding site" evidence="1">
    <location>
        <begin position="3"/>
        <end position="14"/>
    </location>
    <ligand>
        <name>NAD(+)</name>
        <dbReference type="ChEBI" id="CHEBI:57540"/>
    </ligand>
</feature>
<feature type="sequence conflict" description="In Ref. 1; AAA24780." evidence="2" ref="1">
    <original>NGFHIT</original>
    <variation>TGFILP</variation>
    <location>
        <begin position="23"/>
        <end position="28"/>
    </location>
</feature>
<feature type="sequence conflict" description="In Ref. 1; AAA24780." evidence="2" ref="1">
    <original>ETII</original>
    <variation>GNHH</variation>
    <location>
        <begin position="34"/>
        <end position="37"/>
    </location>
</feature>
<feature type="sequence conflict" description="In Ref. 1; AAA24780." evidence="2" ref="1">
    <original>K</original>
    <variation>NG</variation>
    <location>
        <position position="115"/>
    </location>
</feature>
<feature type="sequence conflict" description="In Ref. 1; AAA24780." evidence="2" ref="1">
    <original>KYLKNPAYA</original>
    <variation>IIFEKPSLS</variation>
    <location>
        <begin position="138"/>
        <end position="146"/>
    </location>
</feature>
<feature type="sequence conflict" description="In Ref. 1; AAA24780." evidence="2" ref="1">
    <original>E</original>
    <variation>K</variation>
    <location>
        <position position="167"/>
    </location>
</feature>
<feature type="sequence conflict" description="In Ref. 1; AAA24780." evidence="2" ref="1">
    <original>HYVAD</original>
    <variation>ITCR</variation>
    <location>
        <begin position="198"/>
        <end position="202"/>
    </location>
</feature>
<feature type="sequence conflict" description="In Ref. 1; AAA24780." evidence="2" ref="1">
    <original>NT</original>
    <variation>TS</variation>
    <location>
        <begin position="215"/>
        <end position="216"/>
    </location>
</feature>
<feature type="sequence conflict" description="In Ref. 1; AAA24780." evidence="2" ref="1">
    <original>Q</original>
    <variation>N</variation>
    <location>
        <position position="277"/>
    </location>
</feature>
<feature type="sequence conflict" description="In Ref. 1; AAA24780." evidence="2" ref="1">
    <original>PHLL</original>
    <variation>AAFI</variation>
    <location>
        <begin position="320"/>
        <end position="323"/>
    </location>
</feature>
<feature type="sequence conflict" description="In Ref. 1; AAA24780." evidence="2" ref="1">
    <original>IAEVTGIEDPETVKNIKQNVERYARPQVA</original>
    <variation>DR</variation>
    <location>
        <begin position="356"/>
        <end position="384"/>
    </location>
</feature>
<dbReference type="EC" id="1.1.1.17"/>
<dbReference type="EMBL" id="M38386">
    <property type="protein sequence ID" value="AAA24780.1"/>
    <property type="molecule type" value="Genomic_DNA"/>
</dbReference>
<dbReference type="EMBL" id="AE016830">
    <property type="protein sequence ID" value="AAO80272.1"/>
    <property type="molecule type" value="Genomic_DNA"/>
</dbReference>
<dbReference type="PIR" id="C39435">
    <property type="entry name" value="C39435"/>
</dbReference>
<dbReference type="RefSeq" id="NP_814201.1">
    <property type="nucleotide sequence ID" value="NC_004668.1"/>
</dbReference>
<dbReference type="RefSeq" id="WP_002355280.1">
    <property type="nucleotide sequence ID" value="NZ_KE136524.1"/>
</dbReference>
<dbReference type="SMR" id="P27543"/>
<dbReference type="STRING" id="226185.EF_0413"/>
<dbReference type="EnsemblBacteria" id="AAO80272">
    <property type="protein sequence ID" value="AAO80272"/>
    <property type="gene ID" value="EF_0413"/>
</dbReference>
<dbReference type="KEGG" id="efa:EF0413"/>
<dbReference type="PATRIC" id="fig|226185.45.peg.2919"/>
<dbReference type="eggNOG" id="COG0246">
    <property type="taxonomic scope" value="Bacteria"/>
</dbReference>
<dbReference type="HOGENOM" id="CLU_036089_2_0_9"/>
<dbReference type="Proteomes" id="UP000001415">
    <property type="component" value="Chromosome"/>
</dbReference>
<dbReference type="GO" id="GO:0005829">
    <property type="term" value="C:cytosol"/>
    <property type="evidence" value="ECO:0007669"/>
    <property type="project" value="TreeGrafter"/>
</dbReference>
<dbReference type="GO" id="GO:0008926">
    <property type="term" value="F:mannitol-1-phosphate 5-dehydrogenase activity"/>
    <property type="evidence" value="ECO:0007669"/>
    <property type="project" value="UniProtKB-UniRule"/>
</dbReference>
<dbReference type="GO" id="GO:0019592">
    <property type="term" value="P:mannitol catabolic process"/>
    <property type="evidence" value="ECO:0007669"/>
    <property type="project" value="TreeGrafter"/>
</dbReference>
<dbReference type="Gene3D" id="1.10.1040.10">
    <property type="entry name" value="N-(1-d-carboxylethyl)-l-norvaline Dehydrogenase, domain 2"/>
    <property type="match status" value="1"/>
</dbReference>
<dbReference type="Gene3D" id="3.40.50.720">
    <property type="entry name" value="NAD(P)-binding Rossmann-like Domain"/>
    <property type="match status" value="1"/>
</dbReference>
<dbReference type="HAMAP" id="MF_00196">
    <property type="entry name" value="Mannitol_dehydrog"/>
    <property type="match status" value="1"/>
</dbReference>
<dbReference type="InterPro" id="IPR008927">
    <property type="entry name" value="6-PGluconate_DH-like_C_sf"/>
</dbReference>
<dbReference type="InterPro" id="IPR013328">
    <property type="entry name" value="6PGD_dom2"/>
</dbReference>
<dbReference type="InterPro" id="IPR023028">
    <property type="entry name" value="Mannitol_1_phos_5_DH"/>
</dbReference>
<dbReference type="InterPro" id="IPR000669">
    <property type="entry name" value="Mannitol_DH"/>
</dbReference>
<dbReference type="InterPro" id="IPR013118">
    <property type="entry name" value="Mannitol_DH_C"/>
</dbReference>
<dbReference type="InterPro" id="IPR023027">
    <property type="entry name" value="Mannitol_DH_CS"/>
</dbReference>
<dbReference type="InterPro" id="IPR013131">
    <property type="entry name" value="Mannitol_DH_N"/>
</dbReference>
<dbReference type="InterPro" id="IPR036291">
    <property type="entry name" value="NAD(P)-bd_dom_sf"/>
</dbReference>
<dbReference type="NCBIfam" id="NF002646">
    <property type="entry name" value="PRK02318.1-2"/>
    <property type="match status" value="1"/>
</dbReference>
<dbReference type="NCBIfam" id="NF002647">
    <property type="entry name" value="PRK02318.1-3"/>
    <property type="match status" value="1"/>
</dbReference>
<dbReference type="NCBIfam" id="NF002652">
    <property type="entry name" value="PRK02318.2-5"/>
    <property type="match status" value="1"/>
</dbReference>
<dbReference type="PANTHER" id="PTHR30524:SF0">
    <property type="entry name" value="ALTRONATE OXIDOREDUCTASE-RELATED"/>
    <property type="match status" value="1"/>
</dbReference>
<dbReference type="PANTHER" id="PTHR30524">
    <property type="entry name" value="MANNITOL-1-PHOSPHATE 5-DEHYDROGENASE"/>
    <property type="match status" value="1"/>
</dbReference>
<dbReference type="Pfam" id="PF01232">
    <property type="entry name" value="Mannitol_dh"/>
    <property type="match status" value="1"/>
</dbReference>
<dbReference type="Pfam" id="PF08125">
    <property type="entry name" value="Mannitol_dh_C"/>
    <property type="match status" value="1"/>
</dbReference>
<dbReference type="PRINTS" id="PR00084">
    <property type="entry name" value="MTLDHDRGNASE"/>
</dbReference>
<dbReference type="SUPFAM" id="SSF48179">
    <property type="entry name" value="6-phosphogluconate dehydrogenase C-terminal domain-like"/>
    <property type="match status" value="1"/>
</dbReference>
<dbReference type="SUPFAM" id="SSF51735">
    <property type="entry name" value="NAD(P)-binding Rossmann-fold domains"/>
    <property type="match status" value="1"/>
</dbReference>
<dbReference type="PROSITE" id="PS00974">
    <property type="entry name" value="MANNITOL_DHGENASE"/>
    <property type="match status" value="1"/>
</dbReference>
<gene>
    <name type="primary">mtlD</name>
    <name type="ordered locus">EF_0413</name>
</gene>
<accession>P27543</accession>
<name>MTLD_ENTFA</name>
<comment type="catalytic activity">
    <reaction>
        <text>D-mannitol 1-phosphate + NAD(+) = beta-D-fructose 6-phosphate + NADH + H(+)</text>
        <dbReference type="Rhea" id="RHEA:19661"/>
        <dbReference type="ChEBI" id="CHEBI:15378"/>
        <dbReference type="ChEBI" id="CHEBI:57540"/>
        <dbReference type="ChEBI" id="CHEBI:57634"/>
        <dbReference type="ChEBI" id="CHEBI:57945"/>
        <dbReference type="ChEBI" id="CHEBI:61381"/>
        <dbReference type="EC" id="1.1.1.17"/>
    </reaction>
</comment>
<comment type="subunit">
    <text>Monomer.</text>
</comment>
<comment type="similarity">
    <text evidence="2">Belongs to the mannitol dehydrogenase family.</text>
</comment>
<evidence type="ECO:0000250" key="1"/>
<evidence type="ECO:0000305" key="2"/>
<reference key="1">
    <citation type="journal article" date="1991" name="J. Bacteriol.">
        <title>Mannitol-specific phosphoenolpyruvate-dependent phosphotransferase system of Enterococcus faecalis: molecular cloning and nucleotide sequences of the enzyme IIIMtl gene and the mannitol-1-phosphate dehydrogenase gene, expression in Escherichia coli, and comparison of the gene products with similar enzymes.</title>
        <authorList>
            <person name="Fischer R."/>
            <person name="von Strandmann R.P."/>
            <person name="Hengstenberg W."/>
        </authorList>
    </citation>
    <scope>NUCLEOTIDE SEQUENCE [GENOMIC DNA]</scope>
</reference>
<reference key="2">
    <citation type="journal article" date="2003" name="Science">
        <title>Role of mobile DNA in the evolution of vancomycin-resistant Enterococcus faecalis.</title>
        <authorList>
            <person name="Paulsen I.T."/>
            <person name="Banerjei L."/>
            <person name="Myers G.S.A."/>
            <person name="Nelson K.E."/>
            <person name="Seshadri R."/>
            <person name="Read T.D."/>
            <person name="Fouts D.E."/>
            <person name="Eisen J.A."/>
            <person name="Gill S.R."/>
            <person name="Heidelberg J.F."/>
            <person name="Tettelin H."/>
            <person name="Dodson R.J."/>
            <person name="Umayam L.A."/>
            <person name="Brinkac L.M."/>
            <person name="Beanan M.J."/>
            <person name="Daugherty S.C."/>
            <person name="DeBoy R.T."/>
            <person name="Durkin S.A."/>
            <person name="Kolonay J.F."/>
            <person name="Madupu R."/>
            <person name="Nelson W.C."/>
            <person name="Vamathevan J.J."/>
            <person name="Tran B."/>
            <person name="Upton J."/>
            <person name="Hansen T."/>
            <person name="Shetty J."/>
            <person name="Khouri H.M."/>
            <person name="Utterback T.R."/>
            <person name="Radune D."/>
            <person name="Ketchum K.A."/>
            <person name="Dougherty B.A."/>
            <person name="Fraser C.M."/>
        </authorList>
    </citation>
    <scope>NUCLEOTIDE SEQUENCE [LARGE SCALE GENOMIC DNA]</scope>
    <source>
        <strain>ATCC 700802 / V583</strain>
    </source>
</reference>
<organism>
    <name type="scientific">Enterococcus faecalis (strain ATCC 700802 / V583)</name>
    <dbReference type="NCBI Taxonomy" id="226185"/>
    <lineage>
        <taxon>Bacteria</taxon>
        <taxon>Bacillati</taxon>
        <taxon>Bacillota</taxon>
        <taxon>Bacilli</taxon>
        <taxon>Lactobacillales</taxon>
        <taxon>Enterococcaceae</taxon>
        <taxon>Enterococcus</taxon>
    </lineage>
</organism>